<proteinExistence type="inferred from homology"/>
<feature type="initiator methionine" description="Removed" evidence="1">
    <location>
        <position position="1"/>
    </location>
</feature>
<feature type="chain" id="PRO_0000228458" description="Formamidopyrimidine-DNA glycosylase">
    <location>
        <begin position="2"/>
        <end position="270"/>
    </location>
</feature>
<feature type="zinc finger region" description="FPG-type" evidence="2">
    <location>
        <begin position="236"/>
        <end position="270"/>
    </location>
</feature>
<feature type="active site" description="Schiff-base intermediate with DNA" evidence="2">
    <location>
        <position position="2"/>
    </location>
</feature>
<feature type="active site" description="Proton donor" evidence="2">
    <location>
        <position position="3"/>
    </location>
</feature>
<feature type="active site" description="Proton donor; for beta-elimination activity" evidence="2">
    <location>
        <position position="58"/>
    </location>
</feature>
<feature type="active site" description="Proton donor; for delta-elimination activity" evidence="2">
    <location>
        <position position="260"/>
    </location>
</feature>
<feature type="binding site" evidence="2">
    <location>
        <position position="91"/>
    </location>
    <ligand>
        <name>DNA</name>
        <dbReference type="ChEBI" id="CHEBI:16991"/>
    </ligand>
</feature>
<feature type="binding site" evidence="2">
    <location>
        <position position="110"/>
    </location>
    <ligand>
        <name>DNA</name>
        <dbReference type="ChEBI" id="CHEBI:16991"/>
    </ligand>
</feature>
<feature type="binding site" evidence="2">
    <location>
        <position position="151"/>
    </location>
    <ligand>
        <name>DNA</name>
        <dbReference type="ChEBI" id="CHEBI:16991"/>
    </ligand>
</feature>
<reference key="1">
    <citation type="journal article" date="2005" name="Nat. Biotechnol.">
        <title>Complete genome sequence of the plant commensal Pseudomonas fluorescens Pf-5.</title>
        <authorList>
            <person name="Paulsen I.T."/>
            <person name="Press C.M."/>
            <person name="Ravel J."/>
            <person name="Kobayashi D.Y."/>
            <person name="Myers G.S.A."/>
            <person name="Mavrodi D.V."/>
            <person name="DeBoy R.T."/>
            <person name="Seshadri R."/>
            <person name="Ren Q."/>
            <person name="Madupu R."/>
            <person name="Dodson R.J."/>
            <person name="Durkin A.S."/>
            <person name="Brinkac L.M."/>
            <person name="Daugherty S.C."/>
            <person name="Sullivan S.A."/>
            <person name="Rosovitz M.J."/>
            <person name="Gwinn M.L."/>
            <person name="Zhou L."/>
            <person name="Schneider D.J."/>
            <person name="Cartinhour S.W."/>
            <person name="Nelson W.C."/>
            <person name="Weidman J."/>
            <person name="Watkins K."/>
            <person name="Tran K."/>
            <person name="Khouri H."/>
            <person name="Pierson E.A."/>
            <person name="Pierson L.S. III"/>
            <person name="Thomashow L.S."/>
            <person name="Loper J.E."/>
        </authorList>
    </citation>
    <scope>NUCLEOTIDE SEQUENCE [LARGE SCALE GENOMIC DNA]</scope>
    <source>
        <strain>ATCC BAA-477 / NRRL B-23932 / Pf-5</strain>
    </source>
</reference>
<protein>
    <recommendedName>
        <fullName evidence="2">Formamidopyrimidine-DNA glycosylase</fullName>
        <shortName evidence="2">Fapy-DNA glycosylase</shortName>
        <ecNumber evidence="2">3.2.2.23</ecNumber>
    </recommendedName>
    <alternativeName>
        <fullName evidence="2">DNA-(apurinic or apyrimidinic site) lyase MutM</fullName>
        <shortName evidence="2">AP lyase MutM</shortName>
        <ecNumber evidence="2">4.2.99.18</ecNumber>
    </alternativeName>
</protein>
<gene>
    <name evidence="2" type="primary">mutM</name>
    <name evidence="2" type="synonym">fpg</name>
    <name type="ordered locus">PFL_5870</name>
</gene>
<evidence type="ECO:0000250" key="1"/>
<evidence type="ECO:0000255" key="2">
    <source>
        <dbReference type="HAMAP-Rule" id="MF_00103"/>
    </source>
</evidence>
<keyword id="KW-0227">DNA damage</keyword>
<keyword id="KW-0234">DNA repair</keyword>
<keyword id="KW-0238">DNA-binding</keyword>
<keyword id="KW-0326">Glycosidase</keyword>
<keyword id="KW-0378">Hydrolase</keyword>
<keyword id="KW-0456">Lyase</keyword>
<keyword id="KW-0479">Metal-binding</keyword>
<keyword id="KW-0511">Multifunctional enzyme</keyword>
<keyword id="KW-0862">Zinc</keyword>
<keyword id="KW-0863">Zinc-finger</keyword>
<comment type="function">
    <text evidence="2">Involved in base excision repair of DNA damaged by oxidation or by mutagenic agents. Acts as a DNA glycosylase that recognizes and removes damaged bases. Has a preference for oxidized purines, such as 7,8-dihydro-8-oxoguanine (8-oxoG). Has AP (apurinic/apyrimidinic) lyase activity and introduces nicks in the DNA strand. Cleaves the DNA backbone by beta-delta elimination to generate a single-strand break at the site of the removed base with both 3'- and 5'-phosphates.</text>
</comment>
<comment type="catalytic activity">
    <reaction evidence="2">
        <text>Hydrolysis of DNA containing ring-opened 7-methylguanine residues, releasing 2,6-diamino-4-hydroxy-5-(N-methyl)formamidopyrimidine.</text>
        <dbReference type="EC" id="3.2.2.23"/>
    </reaction>
</comment>
<comment type="catalytic activity">
    <reaction evidence="2">
        <text>2'-deoxyribonucleotide-(2'-deoxyribose 5'-phosphate)-2'-deoxyribonucleotide-DNA = a 3'-end 2'-deoxyribonucleotide-(2,3-dehydro-2,3-deoxyribose 5'-phosphate)-DNA + a 5'-end 5'-phospho-2'-deoxyribonucleoside-DNA + H(+)</text>
        <dbReference type="Rhea" id="RHEA:66592"/>
        <dbReference type="Rhea" id="RHEA-COMP:13180"/>
        <dbReference type="Rhea" id="RHEA-COMP:16897"/>
        <dbReference type="Rhea" id="RHEA-COMP:17067"/>
        <dbReference type="ChEBI" id="CHEBI:15378"/>
        <dbReference type="ChEBI" id="CHEBI:136412"/>
        <dbReference type="ChEBI" id="CHEBI:157695"/>
        <dbReference type="ChEBI" id="CHEBI:167181"/>
        <dbReference type="EC" id="4.2.99.18"/>
    </reaction>
</comment>
<comment type="cofactor">
    <cofactor evidence="2">
        <name>Zn(2+)</name>
        <dbReference type="ChEBI" id="CHEBI:29105"/>
    </cofactor>
    <text evidence="2">Binds 1 zinc ion per subunit.</text>
</comment>
<comment type="subunit">
    <text evidence="2">Monomer.</text>
</comment>
<comment type="similarity">
    <text evidence="2">Belongs to the FPG family.</text>
</comment>
<dbReference type="EC" id="3.2.2.23" evidence="2"/>
<dbReference type="EC" id="4.2.99.18" evidence="2"/>
<dbReference type="EMBL" id="CP000076">
    <property type="protein sequence ID" value="AAY95060.1"/>
    <property type="molecule type" value="Genomic_DNA"/>
</dbReference>
<dbReference type="RefSeq" id="WP_011064043.1">
    <property type="nucleotide sequence ID" value="NC_004129.6"/>
</dbReference>
<dbReference type="SMR" id="Q4K4A5"/>
<dbReference type="STRING" id="220664.PFL_5870"/>
<dbReference type="GeneID" id="57478825"/>
<dbReference type="KEGG" id="pfl:PFL_5870"/>
<dbReference type="PATRIC" id="fig|220664.5.peg.5984"/>
<dbReference type="eggNOG" id="COG0266">
    <property type="taxonomic scope" value="Bacteria"/>
</dbReference>
<dbReference type="HOGENOM" id="CLU_038423_1_1_6"/>
<dbReference type="Proteomes" id="UP000008540">
    <property type="component" value="Chromosome"/>
</dbReference>
<dbReference type="GO" id="GO:0034039">
    <property type="term" value="F:8-oxo-7,8-dihydroguanine DNA N-glycosylase activity"/>
    <property type="evidence" value="ECO:0007669"/>
    <property type="project" value="TreeGrafter"/>
</dbReference>
<dbReference type="GO" id="GO:0140078">
    <property type="term" value="F:class I DNA-(apurinic or apyrimidinic site) endonuclease activity"/>
    <property type="evidence" value="ECO:0007669"/>
    <property type="project" value="UniProtKB-EC"/>
</dbReference>
<dbReference type="GO" id="GO:0003684">
    <property type="term" value="F:damaged DNA binding"/>
    <property type="evidence" value="ECO:0007669"/>
    <property type="project" value="InterPro"/>
</dbReference>
<dbReference type="GO" id="GO:0008270">
    <property type="term" value="F:zinc ion binding"/>
    <property type="evidence" value="ECO:0007669"/>
    <property type="project" value="UniProtKB-UniRule"/>
</dbReference>
<dbReference type="GO" id="GO:0006284">
    <property type="term" value="P:base-excision repair"/>
    <property type="evidence" value="ECO:0007669"/>
    <property type="project" value="InterPro"/>
</dbReference>
<dbReference type="CDD" id="cd08966">
    <property type="entry name" value="EcFpg-like_N"/>
    <property type="match status" value="1"/>
</dbReference>
<dbReference type="FunFam" id="1.10.8.50:FF:000003">
    <property type="entry name" value="Formamidopyrimidine-DNA glycosylase"/>
    <property type="match status" value="1"/>
</dbReference>
<dbReference type="FunFam" id="3.20.190.10:FF:000001">
    <property type="entry name" value="Formamidopyrimidine-DNA glycosylase"/>
    <property type="match status" value="1"/>
</dbReference>
<dbReference type="Gene3D" id="1.10.8.50">
    <property type="match status" value="1"/>
</dbReference>
<dbReference type="Gene3D" id="3.20.190.10">
    <property type="entry name" value="MutM-like, N-terminal"/>
    <property type="match status" value="1"/>
</dbReference>
<dbReference type="HAMAP" id="MF_00103">
    <property type="entry name" value="Fapy_DNA_glycosyl"/>
    <property type="match status" value="1"/>
</dbReference>
<dbReference type="InterPro" id="IPR015886">
    <property type="entry name" value="DNA_glyclase/AP_lyase_DNA-bd"/>
</dbReference>
<dbReference type="InterPro" id="IPR015887">
    <property type="entry name" value="DNA_glyclase_Znf_dom_DNA_BS"/>
</dbReference>
<dbReference type="InterPro" id="IPR020629">
    <property type="entry name" value="Formamido-pyr_DNA_Glyclase"/>
</dbReference>
<dbReference type="InterPro" id="IPR012319">
    <property type="entry name" value="FPG_cat"/>
</dbReference>
<dbReference type="InterPro" id="IPR035937">
    <property type="entry name" value="MutM-like_N-ter"/>
</dbReference>
<dbReference type="InterPro" id="IPR010979">
    <property type="entry name" value="Ribosomal_uS13-like_H2TH"/>
</dbReference>
<dbReference type="InterPro" id="IPR000214">
    <property type="entry name" value="Znf_DNA_glyclase/AP_lyase"/>
</dbReference>
<dbReference type="InterPro" id="IPR010663">
    <property type="entry name" value="Znf_FPG/IleRS"/>
</dbReference>
<dbReference type="NCBIfam" id="TIGR00577">
    <property type="entry name" value="fpg"/>
    <property type="match status" value="1"/>
</dbReference>
<dbReference type="NCBIfam" id="NF002211">
    <property type="entry name" value="PRK01103.1"/>
    <property type="match status" value="1"/>
</dbReference>
<dbReference type="PANTHER" id="PTHR22993">
    <property type="entry name" value="FORMAMIDOPYRIMIDINE-DNA GLYCOSYLASE"/>
    <property type="match status" value="1"/>
</dbReference>
<dbReference type="PANTHER" id="PTHR22993:SF9">
    <property type="entry name" value="FORMAMIDOPYRIMIDINE-DNA GLYCOSYLASE"/>
    <property type="match status" value="1"/>
</dbReference>
<dbReference type="Pfam" id="PF01149">
    <property type="entry name" value="Fapy_DNA_glyco"/>
    <property type="match status" value="1"/>
</dbReference>
<dbReference type="Pfam" id="PF06831">
    <property type="entry name" value="H2TH"/>
    <property type="match status" value="1"/>
</dbReference>
<dbReference type="Pfam" id="PF06827">
    <property type="entry name" value="zf-FPG_IleRS"/>
    <property type="match status" value="1"/>
</dbReference>
<dbReference type="SMART" id="SM00898">
    <property type="entry name" value="Fapy_DNA_glyco"/>
    <property type="match status" value="1"/>
</dbReference>
<dbReference type="SMART" id="SM01232">
    <property type="entry name" value="H2TH"/>
    <property type="match status" value="1"/>
</dbReference>
<dbReference type="SUPFAM" id="SSF57716">
    <property type="entry name" value="Glucocorticoid receptor-like (DNA-binding domain)"/>
    <property type="match status" value="1"/>
</dbReference>
<dbReference type="SUPFAM" id="SSF81624">
    <property type="entry name" value="N-terminal domain of MutM-like DNA repair proteins"/>
    <property type="match status" value="1"/>
</dbReference>
<dbReference type="SUPFAM" id="SSF46946">
    <property type="entry name" value="S13-like H2TH domain"/>
    <property type="match status" value="1"/>
</dbReference>
<dbReference type="PROSITE" id="PS51068">
    <property type="entry name" value="FPG_CAT"/>
    <property type="match status" value="1"/>
</dbReference>
<dbReference type="PROSITE" id="PS01242">
    <property type="entry name" value="ZF_FPG_1"/>
    <property type="match status" value="1"/>
</dbReference>
<dbReference type="PROSITE" id="PS51066">
    <property type="entry name" value="ZF_FPG_2"/>
    <property type="match status" value="1"/>
</dbReference>
<organism>
    <name type="scientific">Pseudomonas fluorescens (strain ATCC BAA-477 / NRRL B-23932 / Pf-5)</name>
    <dbReference type="NCBI Taxonomy" id="220664"/>
    <lineage>
        <taxon>Bacteria</taxon>
        <taxon>Pseudomonadati</taxon>
        <taxon>Pseudomonadota</taxon>
        <taxon>Gammaproteobacteria</taxon>
        <taxon>Pseudomonadales</taxon>
        <taxon>Pseudomonadaceae</taxon>
        <taxon>Pseudomonas</taxon>
    </lineage>
</organism>
<accession>Q4K4A5</accession>
<sequence>MPELPEVETTRRGIAPHLEGQKVSRVIVRDRRLRWPIPEDLDVRLSGQRIVLVERRAKYLLINAEVGTLISHLGMSGNLRLVEVGLPAAKHEHVDIELESGLALRYTDPRRFGAMLWSHDPLNHELLVRLGPEPLTDLFDGERLYQLSRGRSMAVKPFIMDNAVVVGVGNIYATEALFAAGIDPRREAKGISRARYLKLAIEIKRILAAAIERGGTTLRDFIGGDGQPGYFQQELFVYGRGGENCKVCGTGLREIKLGQRASVYCPRCQS</sequence>
<name>FPG_PSEF5</name>